<organism>
    <name type="scientific">Cupriavidus pinatubonensis (strain JMP 134 / LMG 1197)</name>
    <name type="common">Cupriavidus necator (strain JMP 134)</name>
    <dbReference type="NCBI Taxonomy" id="264198"/>
    <lineage>
        <taxon>Bacteria</taxon>
        <taxon>Pseudomonadati</taxon>
        <taxon>Pseudomonadota</taxon>
        <taxon>Betaproteobacteria</taxon>
        <taxon>Burkholderiales</taxon>
        <taxon>Burkholderiaceae</taxon>
        <taxon>Cupriavidus</taxon>
    </lineage>
</organism>
<dbReference type="EMBL" id="CP000090">
    <property type="protein sequence ID" value="AAZ62524.1"/>
    <property type="molecule type" value="Genomic_DNA"/>
</dbReference>
<dbReference type="SMR" id="Q46WF9"/>
<dbReference type="STRING" id="264198.Reut_A3164"/>
<dbReference type="KEGG" id="reu:Reut_A3164"/>
<dbReference type="eggNOG" id="COG0097">
    <property type="taxonomic scope" value="Bacteria"/>
</dbReference>
<dbReference type="HOGENOM" id="CLU_065464_1_2_4"/>
<dbReference type="OrthoDB" id="9805007at2"/>
<dbReference type="GO" id="GO:0022625">
    <property type="term" value="C:cytosolic large ribosomal subunit"/>
    <property type="evidence" value="ECO:0007669"/>
    <property type="project" value="TreeGrafter"/>
</dbReference>
<dbReference type="GO" id="GO:0019843">
    <property type="term" value="F:rRNA binding"/>
    <property type="evidence" value="ECO:0007669"/>
    <property type="project" value="UniProtKB-UniRule"/>
</dbReference>
<dbReference type="GO" id="GO:0003735">
    <property type="term" value="F:structural constituent of ribosome"/>
    <property type="evidence" value="ECO:0007669"/>
    <property type="project" value="InterPro"/>
</dbReference>
<dbReference type="GO" id="GO:0002181">
    <property type="term" value="P:cytoplasmic translation"/>
    <property type="evidence" value="ECO:0007669"/>
    <property type="project" value="TreeGrafter"/>
</dbReference>
<dbReference type="FunFam" id="3.90.930.12:FF:000001">
    <property type="entry name" value="50S ribosomal protein L6"/>
    <property type="match status" value="1"/>
</dbReference>
<dbReference type="FunFam" id="3.90.930.12:FF:000002">
    <property type="entry name" value="50S ribosomal protein L6"/>
    <property type="match status" value="1"/>
</dbReference>
<dbReference type="Gene3D" id="3.90.930.12">
    <property type="entry name" value="Ribosomal protein L6, alpha-beta domain"/>
    <property type="match status" value="2"/>
</dbReference>
<dbReference type="HAMAP" id="MF_01365_B">
    <property type="entry name" value="Ribosomal_uL6_B"/>
    <property type="match status" value="1"/>
</dbReference>
<dbReference type="InterPro" id="IPR000702">
    <property type="entry name" value="Ribosomal_uL6-like"/>
</dbReference>
<dbReference type="InterPro" id="IPR036789">
    <property type="entry name" value="Ribosomal_uL6-like_a/b-dom_sf"/>
</dbReference>
<dbReference type="InterPro" id="IPR020040">
    <property type="entry name" value="Ribosomal_uL6_a/b-dom"/>
</dbReference>
<dbReference type="InterPro" id="IPR019906">
    <property type="entry name" value="Ribosomal_uL6_bac-type"/>
</dbReference>
<dbReference type="InterPro" id="IPR002358">
    <property type="entry name" value="Ribosomal_uL6_CS"/>
</dbReference>
<dbReference type="NCBIfam" id="TIGR03654">
    <property type="entry name" value="L6_bact"/>
    <property type="match status" value="1"/>
</dbReference>
<dbReference type="PANTHER" id="PTHR11655">
    <property type="entry name" value="60S/50S RIBOSOMAL PROTEIN L6/L9"/>
    <property type="match status" value="1"/>
</dbReference>
<dbReference type="PANTHER" id="PTHR11655:SF14">
    <property type="entry name" value="LARGE RIBOSOMAL SUBUNIT PROTEIN UL6M"/>
    <property type="match status" value="1"/>
</dbReference>
<dbReference type="Pfam" id="PF00347">
    <property type="entry name" value="Ribosomal_L6"/>
    <property type="match status" value="2"/>
</dbReference>
<dbReference type="PIRSF" id="PIRSF002162">
    <property type="entry name" value="Ribosomal_L6"/>
    <property type="match status" value="1"/>
</dbReference>
<dbReference type="PRINTS" id="PR00059">
    <property type="entry name" value="RIBOSOMALL6"/>
</dbReference>
<dbReference type="SUPFAM" id="SSF56053">
    <property type="entry name" value="Ribosomal protein L6"/>
    <property type="match status" value="2"/>
</dbReference>
<dbReference type="PROSITE" id="PS00525">
    <property type="entry name" value="RIBOSOMAL_L6_1"/>
    <property type="match status" value="1"/>
</dbReference>
<feature type="chain" id="PRO_0000260922" description="Large ribosomal subunit protein uL6">
    <location>
        <begin position="1"/>
        <end position="177"/>
    </location>
</feature>
<protein>
    <recommendedName>
        <fullName evidence="1">Large ribosomal subunit protein uL6</fullName>
    </recommendedName>
    <alternativeName>
        <fullName evidence="2">50S ribosomal protein L6</fullName>
    </alternativeName>
</protein>
<gene>
    <name evidence="1" type="primary">rplF</name>
    <name type="ordered locus">Reut_A3164</name>
</gene>
<reference key="1">
    <citation type="journal article" date="2010" name="PLoS ONE">
        <title>The complete multipartite genome sequence of Cupriavidus necator JMP134, a versatile pollutant degrader.</title>
        <authorList>
            <person name="Lykidis A."/>
            <person name="Perez-Pantoja D."/>
            <person name="Ledger T."/>
            <person name="Mavromatis K."/>
            <person name="Anderson I.J."/>
            <person name="Ivanova N.N."/>
            <person name="Hooper S.D."/>
            <person name="Lapidus A."/>
            <person name="Lucas S."/>
            <person name="Gonzalez B."/>
            <person name="Kyrpides N.C."/>
        </authorList>
    </citation>
    <scope>NUCLEOTIDE SEQUENCE [LARGE SCALE GENOMIC DNA]</scope>
    <source>
        <strain>JMP134 / LMG 1197</strain>
    </source>
</reference>
<accession>Q46WF9</accession>
<proteinExistence type="inferred from homology"/>
<name>RL6_CUPPJ</name>
<evidence type="ECO:0000255" key="1">
    <source>
        <dbReference type="HAMAP-Rule" id="MF_01365"/>
    </source>
</evidence>
<evidence type="ECO:0000305" key="2"/>
<keyword id="KW-0687">Ribonucleoprotein</keyword>
<keyword id="KW-0689">Ribosomal protein</keyword>
<keyword id="KW-0694">RNA-binding</keyword>
<keyword id="KW-0699">rRNA-binding</keyword>
<comment type="function">
    <text evidence="1">This protein binds to the 23S rRNA, and is important in its secondary structure. It is located near the subunit interface in the base of the L7/L12 stalk, and near the tRNA binding site of the peptidyltransferase center.</text>
</comment>
<comment type="subunit">
    <text evidence="1">Part of the 50S ribosomal subunit.</text>
</comment>
<comment type="similarity">
    <text evidence="1">Belongs to the universal ribosomal protein uL6 family.</text>
</comment>
<sequence>MSRVGKAPIALPKGAEVNVAAGVLSVKGPLGTLSQPIHSLVKVNVENDTLTFAPADESREANALQGTMRALAANMVKGVTTGFERKLNLVGVGYRAQLQGAALKLQLGFSHDVIHEMPEGVKAETPTQTEIIIKGADKQKVGQVAAEVRAYRPPEPYKGKGVRYSDERVILKETKKK</sequence>